<proteinExistence type="inferred from homology"/>
<reference key="1">
    <citation type="journal article" date="2005" name="Infect. Immun.">
        <title>Whole-genome analyses of speciation events in pathogenic Brucellae.</title>
        <authorList>
            <person name="Chain P.S."/>
            <person name="Comerci D.J."/>
            <person name="Tolmasky M.E."/>
            <person name="Larimer F.W."/>
            <person name="Malfatti S.A."/>
            <person name="Vergez L.M."/>
            <person name="Aguero F."/>
            <person name="Land M.L."/>
            <person name="Ugalde R.A."/>
            <person name="Garcia E."/>
        </authorList>
    </citation>
    <scope>NUCLEOTIDE SEQUENCE [LARGE SCALE GENOMIC DNA]</scope>
    <source>
        <strain>2308</strain>
    </source>
</reference>
<name>SYA_BRUA2</name>
<feature type="chain" id="PRO_0000347514" description="Alanine--tRNA ligase">
    <location>
        <begin position="1"/>
        <end position="885"/>
    </location>
</feature>
<feature type="binding site" evidence="1">
    <location>
        <position position="564"/>
    </location>
    <ligand>
        <name>Zn(2+)</name>
        <dbReference type="ChEBI" id="CHEBI:29105"/>
    </ligand>
</feature>
<feature type="binding site" evidence="1">
    <location>
        <position position="568"/>
    </location>
    <ligand>
        <name>Zn(2+)</name>
        <dbReference type="ChEBI" id="CHEBI:29105"/>
    </ligand>
</feature>
<feature type="binding site" evidence="1">
    <location>
        <position position="676"/>
    </location>
    <ligand>
        <name>Zn(2+)</name>
        <dbReference type="ChEBI" id="CHEBI:29105"/>
    </ligand>
</feature>
<feature type="binding site" evidence="1">
    <location>
        <position position="680"/>
    </location>
    <ligand>
        <name>Zn(2+)</name>
        <dbReference type="ChEBI" id="CHEBI:29105"/>
    </ligand>
</feature>
<keyword id="KW-0030">Aminoacyl-tRNA synthetase</keyword>
<keyword id="KW-0067">ATP-binding</keyword>
<keyword id="KW-0963">Cytoplasm</keyword>
<keyword id="KW-0436">Ligase</keyword>
<keyword id="KW-0479">Metal-binding</keyword>
<keyword id="KW-0547">Nucleotide-binding</keyword>
<keyword id="KW-0648">Protein biosynthesis</keyword>
<keyword id="KW-1185">Reference proteome</keyword>
<keyword id="KW-0694">RNA-binding</keyword>
<keyword id="KW-0820">tRNA-binding</keyword>
<keyword id="KW-0862">Zinc</keyword>
<evidence type="ECO:0000255" key="1">
    <source>
        <dbReference type="HAMAP-Rule" id="MF_00036"/>
    </source>
</evidence>
<sequence>MAGVNEIRSTFLDYFRKNGHEVVPSSPLVPRNDPTLMFTNAGMVQFKNVFTGLEHRSYNRATTSQKCVRAGGKHNDLDNVGYTARHHTFFEMLGNFSFGDYFKEDAISFAWNLITREFGLPKDKLLVTVYHTDDDAANFWKKIAGLSDDRIIRIPTSDNFWAMGDTGPCGPCSEIFYDHGDHIWGGPPGSPEEDGDRFIEIWNLVFMQFEQQTPELRIDLPRPSIDTGMGLERIAAVLQGVHDNYDIDLFKALIRASEEATGVKAEGDFRASHRVIADHLRASSFLIADGVLPSNEGRGYVLRRIMRRAMRHAQLLGAKEPLMWRLLPALIREMGQAYPELIRAESLISETLKLEETRFRKTLERGLGLLSDASENLAEGDRLDGETAFKLYDTYGFPLDLTQDALRQRGIAVDTEGFNVAMERQKAEARANWTGSGEAATETIWFGIKDKVGATEFLGYETESAEGVIASLVRDGVEVPSVREGETISVVVNQTPFYGESGGQQGDTGTISGEGFVIAVKDTQKKGEGVFVHIGEVTEGTAKAGDVVELKVDSARRTRIRSNHSATHLLHEALRETLGTHVAQKGSLVAPDRLRFDFSHPKPISAEELEAVENLANEIILQNAPVTTRLMAVDDAIAEGAMALFGEKYGDEVRVVSMGTAKHGSKAGKAYSVELCGGTHVRQTGDIGLVRIISEGGVAAGVRRLEALTGEAARLYLEEQDERVKAIASALKTTSADVLDRVNALIDERKKLERELADARKKLALGGGSSDGGSAVEAVNGVNFLGKIVTGVSPRDLKPLADEGKKQVGSGVVLFIGVGEDGKASAVAAVTEDMVGRFSAVDLVRAASAALGGAGGGGRPDMAQAGGPDGAKAADAIAAVKALIA</sequence>
<dbReference type="EC" id="6.1.1.7" evidence="1"/>
<dbReference type="EMBL" id="AM040264">
    <property type="protein sequence ID" value="CAJ11179.1"/>
    <property type="molecule type" value="Genomic_DNA"/>
</dbReference>
<dbReference type="RefSeq" id="WP_002964330.1">
    <property type="nucleotide sequence ID" value="NZ_KN046823.1"/>
</dbReference>
<dbReference type="SMR" id="Q2YRU8"/>
<dbReference type="STRING" id="359391.BAB1_1223"/>
<dbReference type="GeneID" id="97533555"/>
<dbReference type="KEGG" id="bmf:BAB1_1223"/>
<dbReference type="PATRIC" id="fig|359391.11.peg.122"/>
<dbReference type="HOGENOM" id="CLU_004485_1_1_5"/>
<dbReference type="PhylomeDB" id="Q2YRU8"/>
<dbReference type="Proteomes" id="UP000002719">
    <property type="component" value="Chromosome I"/>
</dbReference>
<dbReference type="GO" id="GO:0005829">
    <property type="term" value="C:cytosol"/>
    <property type="evidence" value="ECO:0007669"/>
    <property type="project" value="TreeGrafter"/>
</dbReference>
<dbReference type="GO" id="GO:0004813">
    <property type="term" value="F:alanine-tRNA ligase activity"/>
    <property type="evidence" value="ECO:0007669"/>
    <property type="project" value="UniProtKB-UniRule"/>
</dbReference>
<dbReference type="GO" id="GO:0002161">
    <property type="term" value="F:aminoacyl-tRNA deacylase activity"/>
    <property type="evidence" value="ECO:0007669"/>
    <property type="project" value="TreeGrafter"/>
</dbReference>
<dbReference type="GO" id="GO:0005524">
    <property type="term" value="F:ATP binding"/>
    <property type="evidence" value="ECO:0007669"/>
    <property type="project" value="UniProtKB-UniRule"/>
</dbReference>
<dbReference type="GO" id="GO:0000049">
    <property type="term" value="F:tRNA binding"/>
    <property type="evidence" value="ECO:0007669"/>
    <property type="project" value="UniProtKB-KW"/>
</dbReference>
<dbReference type="GO" id="GO:0008270">
    <property type="term" value="F:zinc ion binding"/>
    <property type="evidence" value="ECO:0007669"/>
    <property type="project" value="UniProtKB-UniRule"/>
</dbReference>
<dbReference type="GO" id="GO:0006419">
    <property type="term" value="P:alanyl-tRNA aminoacylation"/>
    <property type="evidence" value="ECO:0007669"/>
    <property type="project" value="UniProtKB-UniRule"/>
</dbReference>
<dbReference type="GO" id="GO:0045892">
    <property type="term" value="P:negative regulation of DNA-templated transcription"/>
    <property type="evidence" value="ECO:0007669"/>
    <property type="project" value="TreeGrafter"/>
</dbReference>
<dbReference type="CDD" id="cd00673">
    <property type="entry name" value="AlaRS_core"/>
    <property type="match status" value="1"/>
</dbReference>
<dbReference type="FunFam" id="2.40.30.130:FF:000001">
    <property type="entry name" value="Alanine--tRNA ligase"/>
    <property type="match status" value="1"/>
</dbReference>
<dbReference type="FunFam" id="3.10.310.40:FF:000001">
    <property type="entry name" value="Alanine--tRNA ligase"/>
    <property type="match status" value="1"/>
</dbReference>
<dbReference type="FunFam" id="3.30.54.20:FF:000001">
    <property type="entry name" value="Alanine--tRNA ligase"/>
    <property type="match status" value="1"/>
</dbReference>
<dbReference type="FunFam" id="3.30.930.10:FF:000004">
    <property type="entry name" value="Alanine--tRNA ligase"/>
    <property type="match status" value="1"/>
</dbReference>
<dbReference type="FunFam" id="3.30.980.10:FF:000004">
    <property type="entry name" value="Alanine--tRNA ligase, cytoplasmic"/>
    <property type="match status" value="1"/>
</dbReference>
<dbReference type="Gene3D" id="2.40.30.130">
    <property type="match status" value="1"/>
</dbReference>
<dbReference type="Gene3D" id="3.10.310.40">
    <property type="match status" value="1"/>
</dbReference>
<dbReference type="Gene3D" id="3.30.54.20">
    <property type="match status" value="1"/>
</dbReference>
<dbReference type="Gene3D" id="6.10.250.550">
    <property type="match status" value="1"/>
</dbReference>
<dbReference type="Gene3D" id="3.30.930.10">
    <property type="entry name" value="Bira Bifunctional Protein, Domain 2"/>
    <property type="match status" value="1"/>
</dbReference>
<dbReference type="Gene3D" id="3.30.980.10">
    <property type="entry name" value="Threonyl-trna Synthetase, Chain A, domain 2"/>
    <property type="match status" value="1"/>
</dbReference>
<dbReference type="HAMAP" id="MF_00036_B">
    <property type="entry name" value="Ala_tRNA_synth_B"/>
    <property type="match status" value="1"/>
</dbReference>
<dbReference type="InterPro" id="IPR045864">
    <property type="entry name" value="aa-tRNA-synth_II/BPL/LPL"/>
</dbReference>
<dbReference type="InterPro" id="IPR002318">
    <property type="entry name" value="Ala-tRNA-lgiase_IIc"/>
</dbReference>
<dbReference type="InterPro" id="IPR018162">
    <property type="entry name" value="Ala-tRNA-ligase_IIc_anticod-bd"/>
</dbReference>
<dbReference type="InterPro" id="IPR018165">
    <property type="entry name" value="Ala-tRNA-synth_IIc_core"/>
</dbReference>
<dbReference type="InterPro" id="IPR018164">
    <property type="entry name" value="Ala-tRNA-synth_IIc_N"/>
</dbReference>
<dbReference type="InterPro" id="IPR050058">
    <property type="entry name" value="Ala-tRNA_ligase"/>
</dbReference>
<dbReference type="InterPro" id="IPR023033">
    <property type="entry name" value="Ala_tRNA_ligase_euk/bac"/>
</dbReference>
<dbReference type="InterPro" id="IPR003156">
    <property type="entry name" value="DHHA1_dom"/>
</dbReference>
<dbReference type="InterPro" id="IPR018163">
    <property type="entry name" value="Thr/Ala-tRNA-synth_IIc_edit"/>
</dbReference>
<dbReference type="InterPro" id="IPR009000">
    <property type="entry name" value="Transl_B-barrel_sf"/>
</dbReference>
<dbReference type="InterPro" id="IPR012947">
    <property type="entry name" value="tRNA_SAD"/>
</dbReference>
<dbReference type="NCBIfam" id="TIGR00344">
    <property type="entry name" value="alaS"/>
    <property type="match status" value="1"/>
</dbReference>
<dbReference type="PANTHER" id="PTHR11777:SF9">
    <property type="entry name" value="ALANINE--TRNA LIGASE, CYTOPLASMIC"/>
    <property type="match status" value="1"/>
</dbReference>
<dbReference type="PANTHER" id="PTHR11777">
    <property type="entry name" value="ALANYL-TRNA SYNTHETASE"/>
    <property type="match status" value="1"/>
</dbReference>
<dbReference type="Pfam" id="PF02272">
    <property type="entry name" value="DHHA1"/>
    <property type="match status" value="1"/>
</dbReference>
<dbReference type="Pfam" id="PF01411">
    <property type="entry name" value="tRNA-synt_2c"/>
    <property type="match status" value="1"/>
</dbReference>
<dbReference type="Pfam" id="PF07973">
    <property type="entry name" value="tRNA_SAD"/>
    <property type="match status" value="1"/>
</dbReference>
<dbReference type="PRINTS" id="PR00980">
    <property type="entry name" value="TRNASYNTHALA"/>
</dbReference>
<dbReference type="SMART" id="SM00863">
    <property type="entry name" value="tRNA_SAD"/>
    <property type="match status" value="1"/>
</dbReference>
<dbReference type="SUPFAM" id="SSF55681">
    <property type="entry name" value="Class II aaRS and biotin synthetases"/>
    <property type="match status" value="1"/>
</dbReference>
<dbReference type="SUPFAM" id="SSF101353">
    <property type="entry name" value="Putative anticodon-binding domain of alanyl-tRNA synthetase (AlaRS)"/>
    <property type="match status" value="1"/>
</dbReference>
<dbReference type="SUPFAM" id="SSF55186">
    <property type="entry name" value="ThrRS/AlaRS common domain"/>
    <property type="match status" value="1"/>
</dbReference>
<dbReference type="SUPFAM" id="SSF50447">
    <property type="entry name" value="Translation proteins"/>
    <property type="match status" value="1"/>
</dbReference>
<dbReference type="PROSITE" id="PS50860">
    <property type="entry name" value="AA_TRNA_LIGASE_II_ALA"/>
    <property type="match status" value="1"/>
</dbReference>
<comment type="function">
    <text evidence="1">Catalyzes the attachment of alanine to tRNA(Ala) in a two-step reaction: alanine is first activated by ATP to form Ala-AMP and then transferred to the acceptor end of tRNA(Ala). Also edits incorrectly charged Ser-tRNA(Ala) and Gly-tRNA(Ala) via its editing domain.</text>
</comment>
<comment type="catalytic activity">
    <reaction evidence="1">
        <text>tRNA(Ala) + L-alanine + ATP = L-alanyl-tRNA(Ala) + AMP + diphosphate</text>
        <dbReference type="Rhea" id="RHEA:12540"/>
        <dbReference type="Rhea" id="RHEA-COMP:9657"/>
        <dbReference type="Rhea" id="RHEA-COMP:9923"/>
        <dbReference type="ChEBI" id="CHEBI:30616"/>
        <dbReference type="ChEBI" id="CHEBI:33019"/>
        <dbReference type="ChEBI" id="CHEBI:57972"/>
        <dbReference type="ChEBI" id="CHEBI:78442"/>
        <dbReference type="ChEBI" id="CHEBI:78497"/>
        <dbReference type="ChEBI" id="CHEBI:456215"/>
        <dbReference type="EC" id="6.1.1.7"/>
    </reaction>
</comment>
<comment type="cofactor">
    <cofactor evidence="1">
        <name>Zn(2+)</name>
        <dbReference type="ChEBI" id="CHEBI:29105"/>
    </cofactor>
    <text evidence="1">Binds 1 zinc ion per subunit.</text>
</comment>
<comment type="subcellular location">
    <subcellularLocation>
        <location evidence="1">Cytoplasm</location>
    </subcellularLocation>
</comment>
<comment type="domain">
    <text evidence="1">Consists of three domains; the N-terminal catalytic domain, the editing domain and the C-terminal C-Ala domain. The editing domain removes incorrectly charged amino acids, while the C-Ala domain, along with tRNA(Ala), serves as a bridge to cooperatively bring together the editing and aminoacylation centers thus stimulating deacylation of misacylated tRNAs.</text>
</comment>
<comment type="similarity">
    <text evidence="1">Belongs to the class-II aminoacyl-tRNA synthetase family.</text>
</comment>
<organism>
    <name type="scientific">Brucella abortus (strain 2308)</name>
    <dbReference type="NCBI Taxonomy" id="359391"/>
    <lineage>
        <taxon>Bacteria</taxon>
        <taxon>Pseudomonadati</taxon>
        <taxon>Pseudomonadota</taxon>
        <taxon>Alphaproteobacteria</taxon>
        <taxon>Hyphomicrobiales</taxon>
        <taxon>Brucellaceae</taxon>
        <taxon>Brucella/Ochrobactrum group</taxon>
        <taxon>Brucella</taxon>
    </lineage>
</organism>
<accession>Q2YRU8</accession>
<gene>
    <name evidence="1" type="primary">alaS</name>
    <name type="ordered locus">BAB1_1223</name>
</gene>
<protein>
    <recommendedName>
        <fullName evidence="1">Alanine--tRNA ligase</fullName>
        <ecNumber evidence="1">6.1.1.7</ecNumber>
    </recommendedName>
    <alternativeName>
        <fullName evidence="1">Alanyl-tRNA synthetase</fullName>
        <shortName evidence="1">AlaRS</shortName>
    </alternativeName>
</protein>